<organism>
    <name type="scientific">Homo sapiens</name>
    <name type="common">Human</name>
    <dbReference type="NCBI Taxonomy" id="9606"/>
    <lineage>
        <taxon>Eukaryota</taxon>
        <taxon>Metazoa</taxon>
        <taxon>Chordata</taxon>
        <taxon>Craniata</taxon>
        <taxon>Vertebrata</taxon>
        <taxon>Euteleostomi</taxon>
        <taxon>Mammalia</taxon>
        <taxon>Eutheria</taxon>
        <taxon>Euarchontoglires</taxon>
        <taxon>Primates</taxon>
        <taxon>Haplorrhini</taxon>
        <taxon>Catarrhini</taxon>
        <taxon>Hominidae</taxon>
        <taxon>Homo</taxon>
    </lineage>
</organism>
<reference key="1">
    <citation type="journal article" date="2004" name="Nature">
        <title>DNA sequence and analysis of human chromosome 9.</title>
        <authorList>
            <person name="Humphray S.J."/>
            <person name="Oliver K."/>
            <person name="Hunt A.R."/>
            <person name="Plumb R.W."/>
            <person name="Loveland J.E."/>
            <person name="Howe K.L."/>
            <person name="Andrews T.D."/>
            <person name="Searle S."/>
            <person name="Hunt S.E."/>
            <person name="Scott C.E."/>
            <person name="Jones M.C."/>
            <person name="Ainscough R."/>
            <person name="Almeida J.P."/>
            <person name="Ambrose K.D."/>
            <person name="Ashwell R.I.S."/>
            <person name="Babbage A.K."/>
            <person name="Babbage S."/>
            <person name="Bagguley C.L."/>
            <person name="Bailey J."/>
            <person name="Banerjee R."/>
            <person name="Barker D.J."/>
            <person name="Barlow K.F."/>
            <person name="Bates K."/>
            <person name="Beasley H."/>
            <person name="Beasley O."/>
            <person name="Bird C.P."/>
            <person name="Bray-Allen S."/>
            <person name="Brown A.J."/>
            <person name="Brown J.Y."/>
            <person name="Burford D."/>
            <person name="Burrill W."/>
            <person name="Burton J."/>
            <person name="Carder C."/>
            <person name="Carter N.P."/>
            <person name="Chapman J.C."/>
            <person name="Chen Y."/>
            <person name="Clarke G."/>
            <person name="Clark S.Y."/>
            <person name="Clee C.M."/>
            <person name="Clegg S."/>
            <person name="Collier R.E."/>
            <person name="Corby N."/>
            <person name="Crosier M."/>
            <person name="Cummings A.T."/>
            <person name="Davies J."/>
            <person name="Dhami P."/>
            <person name="Dunn M."/>
            <person name="Dutta I."/>
            <person name="Dyer L.W."/>
            <person name="Earthrowl M.E."/>
            <person name="Faulkner L."/>
            <person name="Fleming C.J."/>
            <person name="Frankish A."/>
            <person name="Frankland J.A."/>
            <person name="French L."/>
            <person name="Fricker D.G."/>
            <person name="Garner P."/>
            <person name="Garnett J."/>
            <person name="Ghori J."/>
            <person name="Gilbert J.G.R."/>
            <person name="Glison C."/>
            <person name="Grafham D.V."/>
            <person name="Gribble S."/>
            <person name="Griffiths C."/>
            <person name="Griffiths-Jones S."/>
            <person name="Grocock R."/>
            <person name="Guy J."/>
            <person name="Hall R.E."/>
            <person name="Hammond S."/>
            <person name="Harley J.L."/>
            <person name="Harrison E.S.I."/>
            <person name="Hart E.A."/>
            <person name="Heath P.D."/>
            <person name="Henderson C.D."/>
            <person name="Hopkins B.L."/>
            <person name="Howard P.J."/>
            <person name="Howden P.J."/>
            <person name="Huckle E."/>
            <person name="Johnson C."/>
            <person name="Johnson D."/>
            <person name="Joy A.A."/>
            <person name="Kay M."/>
            <person name="Keenan S."/>
            <person name="Kershaw J.K."/>
            <person name="Kimberley A.M."/>
            <person name="King A."/>
            <person name="Knights A."/>
            <person name="Laird G.K."/>
            <person name="Langford C."/>
            <person name="Lawlor S."/>
            <person name="Leongamornlert D.A."/>
            <person name="Leversha M."/>
            <person name="Lloyd C."/>
            <person name="Lloyd D.M."/>
            <person name="Lovell J."/>
            <person name="Martin S."/>
            <person name="Mashreghi-Mohammadi M."/>
            <person name="Matthews L."/>
            <person name="McLaren S."/>
            <person name="McLay K.E."/>
            <person name="McMurray A."/>
            <person name="Milne S."/>
            <person name="Nickerson T."/>
            <person name="Nisbett J."/>
            <person name="Nordsiek G."/>
            <person name="Pearce A.V."/>
            <person name="Peck A.I."/>
            <person name="Porter K.M."/>
            <person name="Pandian R."/>
            <person name="Pelan S."/>
            <person name="Phillimore B."/>
            <person name="Povey S."/>
            <person name="Ramsey Y."/>
            <person name="Rand V."/>
            <person name="Scharfe M."/>
            <person name="Sehra H.K."/>
            <person name="Shownkeen R."/>
            <person name="Sims S.K."/>
            <person name="Skuce C.D."/>
            <person name="Smith M."/>
            <person name="Steward C.A."/>
            <person name="Swarbreck D."/>
            <person name="Sycamore N."/>
            <person name="Tester J."/>
            <person name="Thorpe A."/>
            <person name="Tracey A."/>
            <person name="Tromans A."/>
            <person name="Thomas D.W."/>
            <person name="Wall M."/>
            <person name="Wallis J.M."/>
            <person name="West A.P."/>
            <person name="Whitehead S.L."/>
            <person name="Willey D.L."/>
            <person name="Williams S.A."/>
            <person name="Wilming L."/>
            <person name="Wray P.W."/>
            <person name="Young L."/>
            <person name="Ashurst J.L."/>
            <person name="Coulson A."/>
            <person name="Blocker H."/>
            <person name="Durbin R.M."/>
            <person name="Sulston J.E."/>
            <person name="Hubbard T."/>
            <person name="Jackson M.J."/>
            <person name="Bentley D.R."/>
            <person name="Beck S."/>
            <person name="Rogers J."/>
            <person name="Dunham I."/>
        </authorList>
    </citation>
    <scope>NUCLEOTIDE SEQUENCE [LARGE SCALE GENOMIC DNA]</scope>
</reference>
<reference key="2">
    <citation type="journal article" date="1987" name="EMBO J.">
        <title>The primary structure of human dopamine-beta-hydroxylase: insights into the relationship between the soluble and the membrane-bound forms of the enzyme.</title>
        <authorList>
            <person name="Lamouroux A."/>
            <person name="Vigny A."/>
            <person name="Faucon Biguet N."/>
            <person name="Darmon M.C."/>
            <person name="Franck R."/>
            <person name="Henry J.-P."/>
            <person name="Mallet J."/>
        </authorList>
    </citation>
    <scope>NUCLEOTIDE SEQUENCE [MRNA] OF 2-617</scope>
    <scope>PARTIAL PROTEIN SEQUENCE</scope>
    <scope>VARIANTS THR-211 AND CYS-549</scope>
    <scope>CATALYTIC ACTIVITY</scope>
    <scope>FUNCTION</scope>
    <scope>PATHWAY</scope>
</reference>
<reference key="3">
    <citation type="journal article" date="2004" name="Genome Res.">
        <title>The status, quality, and expansion of the NIH full-length cDNA project: the Mammalian Gene Collection (MGC).</title>
        <authorList>
            <consortium name="The MGC Project Team"/>
        </authorList>
    </citation>
    <scope>NUCLEOTIDE SEQUENCE [LARGE SCALE MRNA] OF 3-617</scope>
    <source>
        <tissue>Brain</tissue>
    </source>
</reference>
<reference key="4">
    <citation type="journal article" date="1989" name="Nucleic Acids Res.">
        <title>Human dopamine beta-hydroxylase gene: two mRNA types having different 3'-terminal regions are produced through alternative polyadenylation.</title>
        <authorList>
            <person name="Kobayashi K."/>
            <person name="Kurosawa Y."/>
            <person name="Fukita K."/>
            <person name="Nagatsu T."/>
        </authorList>
    </citation>
    <scope>NUCLEOTIDE SEQUENCE [MRNA] OF 5-617</scope>
</reference>
<reference key="5">
    <citation type="journal article" date="1996" name="Biochem. J.">
        <title>Expression of human dopamine beta-hydroxylase in Drosophila Schneider 2 cells.</title>
        <authorList>
            <person name="Li B."/>
            <person name="Tsing S."/>
            <person name="Kosaka A.H."/>
            <person name="Nguyen B."/>
            <person name="Osen E.G."/>
            <person name="Bach C."/>
            <person name="Chan H."/>
            <person name="Barnett J."/>
        </authorList>
    </citation>
    <scope>PROTEIN SEQUENCE OF 40-48</scope>
    <scope>CATALYTIC ACTIVITY</scope>
    <scope>FUNCTION</scope>
    <scope>PATHWAY</scope>
    <scope>SUBCELLULAR LOCATION</scope>
    <scope>GLYCOSYLATION</scope>
    <scope>COFACTOR</scope>
    <scope>BIOPHYSICOCHEMICAL PROPERTIES</scope>
</reference>
<reference key="6">
    <citation type="journal article" date="1994" name="J. Biol. Chem.">
        <title>Functional and high level expression of human dopamine beta-hydroxylase in transgenic mice.</title>
        <authorList>
            <person name="Kobayashi K."/>
            <person name="Morita S."/>
            <person name="Mizuguchi T."/>
            <person name="Sawada H."/>
            <person name="Yamada K."/>
            <person name="Nagatsu I."/>
            <person name="Fujita K."/>
            <person name="Nagatsu T."/>
        </authorList>
    </citation>
    <scope>FUNCTION</scope>
    <scope>CATALYTIC ACTIVITY</scope>
    <scope>SUBCELLULAR LOCATION</scope>
</reference>
<reference key="7">
    <citation type="journal article" date="2005" name="J. Proteome Res.">
        <title>Human plasma N-glycoproteome analysis by immunoaffinity subtraction, hydrazide chemistry, and mass spectrometry.</title>
        <authorList>
            <person name="Liu T."/>
            <person name="Qian W.-J."/>
            <person name="Gritsenko M.A."/>
            <person name="Camp D.G. II"/>
            <person name="Monroe M.E."/>
            <person name="Moore R.J."/>
            <person name="Smith R.D."/>
        </authorList>
    </citation>
    <scope>GLYCOSYLATION [LARGE SCALE ANALYSIS] AT ASN-184</scope>
    <source>
        <tissue>Plasma</tissue>
    </source>
</reference>
<reference key="8">
    <citation type="journal article" date="2009" name="Mol. Cell. Proteomics">
        <title>A strategy for precise and large scale identification of core fucosylated glycoproteins.</title>
        <authorList>
            <person name="Jia W."/>
            <person name="Lu Z."/>
            <person name="Fu Y."/>
            <person name="Wang H.P."/>
            <person name="Wang L.H."/>
            <person name="Chi H."/>
            <person name="Yuan Z.F."/>
            <person name="Zheng Z.B."/>
            <person name="Song L.N."/>
            <person name="Han H.H."/>
            <person name="Liang Y.M."/>
            <person name="Wang J.L."/>
            <person name="Cai Y."/>
            <person name="Zhang Y.K."/>
            <person name="Deng Y.L."/>
            <person name="Ying W.T."/>
            <person name="He S.M."/>
            <person name="Qian X.H."/>
        </authorList>
    </citation>
    <scope>GLYCOSYLATION AT ASN-184</scope>
</reference>
<reference key="9">
    <citation type="journal article" date="2016" name="PLoS ONE">
        <title>Human bacterial artificial chromosome (BAC) transgenesis fully rescues noradrenergic function in dopamine beta-hydroxylase knockout mice.</title>
        <authorList>
            <person name="Cubells J.F."/>
            <person name="Schroeder J.P."/>
            <person name="Barrie E.S."/>
            <person name="Manvich D.F."/>
            <person name="Sadee W."/>
            <person name="Berg T."/>
            <person name="Mercer K."/>
            <person name="Stowe T.A."/>
            <person name="Liles L.C."/>
            <person name="Squires K.E."/>
            <person name="Mezher A."/>
            <person name="Curtin P."/>
            <person name="Perdomo D.L."/>
            <person name="Szot P."/>
            <person name="Weinshenker D."/>
        </authorList>
    </citation>
    <scope>FUNCTION</scope>
    <scope>PATHWAY</scope>
</reference>
<reference evidence="22" key="10">
    <citation type="journal article" date="2016" name="Sci. Adv.">
        <title>The crystal structure of human dopamine beta-hydroxylase at 2.9 A resolution.</title>
        <authorList>
            <person name="Vendelboe T.V."/>
            <person name="Harris P."/>
            <person name="Zhao Y."/>
            <person name="Walter T.S."/>
            <person name="Harlos K."/>
            <person name="El Omari K."/>
            <person name="Christensen H.E."/>
        </authorList>
    </citation>
    <scope>X-RAY CRYSTALLOGRAPHY (2.90 ANGSTROMS) OF 40-617 IN COMPLEX WITH CU(2+)</scope>
    <scope>SUBUNIT</scope>
    <scope>DISULFIDE BONDS</scope>
    <scope>GLYCOSYLATION AT ASN-64; ASN-184; ASN-344 AND ASN-566</scope>
    <scope>COFACTOR</scope>
</reference>
<reference key="11">
    <citation type="journal article" date="1999" name="Am. J. Med. Genet.">
        <title>No evidence for allelic association between schizophrenia and a functional variant of the human dopamine beta-hydroxylase gene (DBH).</title>
        <authorList>
            <person name="Williams H.J."/>
            <person name="Bray N."/>
            <person name="Murphy K.C."/>
            <person name="Cardno A.G."/>
            <person name="Jones L.A."/>
            <person name="Owen M.J."/>
        </authorList>
    </citation>
    <scope>VARIANT SER-318</scope>
</reference>
<reference key="12">
    <citation type="journal article" date="1999" name="Nat. Genet.">
        <title>Characterization of single-nucleotide polymorphisms in coding regions of human genes.</title>
        <authorList>
            <person name="Cargill M."/>
            <person name="Altshuler D."/>
            <person name="Ireland J."/>
            <person name="Sklar P."/>
            <person name="Ardlie K."/>
            <person name="Patil N."/>
            <person name="Shaw N."/>
            <person name="Lane C.R."/>
            <person name="Lim E.P."/>
            <person name="Kalyanaraman N."/>
            <person name="Nemesh J."/>
            <person name="Ziaugra L."/>
            <person name="Friedland L."/>
            <person name="Rolfe A."/>
            <person name="Warrington J."/>
            <person name="Lipshutz R."/>
            <person name="Daley G.Q."/>
            <person name="Lander E.S."/>
        </authorList>
    </citation>
    <scope>VARIANTS SER-318 AND CYS-549</scope>
</reference>
<reference key="13">
    <citation type="journal article" date="1999" name="Nat. Genet.">
        <authorList>
            <person name="Cargill M."/>
            <person name="Altshuler D."/>
            <person name="Ireland J."/>
            <person name="Sklar P."/>
            <person name="Ardlie K."/>
            <person name="Patil N."/>
            <person name="Shaw N."/>
            <person name="Lane C.R."/>
            <person name="Lim E.P."/>
            <person name="Kalyanaraman N."/>
            <person name="Nemesh J."/>
            <person name="Ziaugra L."/>
            <person name="Friedland L."/>
            <person name="Rolfe A."/>
            <person name="Warrington J."/>
            <person name="Lipshutz R."/>
            <person name="Daley G.Q."/>
            <person name="Lander E.S."/>
        </authorList>
    </citation>
    <scope>ERRATUM OF PUBMED:10391209</scope>
</reference>
<reference key="14">
    <citation type="journal article" date="1999" name="Nat. Genet.">
        <title>Patterns of single-nucleotide polymorphisms in candidate genes for blood-pressure homeostasis.</title>
        <authorList>
            <person name="Halushka M.K."/>
            <person name="Fan J.-B."/>
            <person name="Bentley K."/>
            <person name="Hsie L."/>
            <person name="Shen N."/>
            <person name="Weder A."/>
            <person name="Cooper R."/>
            <person name="Lipshutz R."/>
            <person name="Chakravarti A."/>
        </authorList>
    </citation>
    <scope>VARIANTS THR-211 AND SER-318</scope>
</reference>
<reference key="15">
    <citation type="journal article" date="2002" name="Am. J. Med. Genet.">
        <title>Mutations in the dopamine beta-hydroxylase gene are associated with human norepinephrine deficiency.</title>
        <authorList>
            <person name="Kim C.-H."/>
            <person name="Zabetian C.P."/>
            <person name="Cubells J.F."/>
            <person name="Cho S."/>
            <person name="Biaggioni I."/>
            <person name="Cohen B.M."/>
            <person name="Robertson D."/>
            <person name="Kim K.-S."/>
        </authorList>
    </citation>
    <scope>VARIANTS ORTHYP1 MET-101; GLU-114 AND ASN-345</scope>
</reference>
<keyword id="KW-0002">3D-structure</keyword>
<keyword id="KW-0127">Catecholamine biosynthesis</keyword>
<keyword id="KW-0186">Copper</keyword>
<keyword id="KW-0968">Cytoplasmic vesicle</keyword>
<keyword id="KW-0903">Direct protein sequencing</keyword>
<keyword id="KW-0225">Disease variant</keyword>
<keyword id="KW-1015">Disulfide bond</keyword>
<keyword id="KW-0325">Glycoprotein</keyword>
<keyword id="KW-0472">Membrane</keyword>
<keyword id="KW-0479">Metal-binding</keyword>
<keyword id="KW-0503">Monooxygenase</keyword>
<keyword id="KW-0560">Oxidoreductase</keyword>
<keyword id="KW-1267">Proteomics identification</keyword>
<keyword id="KW-1185">Reference proteome</keyword>
<keyword id="KW-0964">Secreted</keyword>
<keyword id="KW-0735">Signal-anchor</keyword>
<keyword id="KW-0812">Transmembrane</keyword>
<keyword id="KW-1133">Transmembrane helix</keyword>
<keyword id="KW-0847">Vitamin C</keyword>
<protein>
    <recommendedName>
        <fullName evidence="16 17">Dopamine beta-hydroxylase</fullName>
        <ecNumber evidence="13 14 15">1.14.17.1</ecNumber>
    </recommendedName>
    <alternativeName>
        <fullName evidence="16">Dopamine beta-monooxygenase</fullName>
    </alternativeName>
    <component>
        <recommendedName>
            <fullName>Soluble dopamine beta-hydroxylase</fullName>
        </recommendedName>
    </component>
</protein>
<feature type="chain" id="PRO_0000006356" description="Dopamine beta-hydroxylase">
    <location>
        <begin position="1"/>
        <end position="617"/>
    </location>
</feature>
<feature type="chain" id="PRO_0000308209" description="Soluble dopamine beta-hydroxylase">
    <location>
        <begin position="40"/>
        <end position="617"/>
    </location>
</feature>
<feature type="topological domain" description="Cytoplasmic" evidence="2">
    <location>
        <begin position="1"/>
        <end position="16"/>
    </location>
</feature>
<feature type="transmembrane region" description="Helical; Signal-anchor for type II membrane protein" evidence="2">
    <location>
        <begin position="17"/>
        <end position="37"/>
    </location>
</feature>
<feature type="topological domain" description="Intragranular" evidence="2">
    <location>
        <begin position="38"/>
        <end position="617"/>
    </location>
</feature>
<feature type="domain" description="DOMON" evidence="3">
    <location>
        <begin position="57"/>
        <end position="173"/>
    </location>
</feature>
<feature type="region of interest" description="Disordered" evidence="4">
    <location>
        <begin position="590"/>
        <end position="617"/>
    </location>
</feature>
<feature type="active site" evidence="2">
    <location>
        <position position="230"/>
    </location>
</feature>
<feature type="active site" evidence="2">
    <location>
        <position position="412"/>
    </location>
</feature>
<feature type="binding site" evidence="19">
    <location>
        <position position="262"/>
    </location>
    <ligand>
        <name>Cu(2+)</name>
        <dbReference type="ChEBI" id="CHEBI:29036"/>
        <label>A</label>
    </ligand>
</feature>
<feature type="binding site" evidence="19">
    <location>
        <position position="263"/>
    </location>
    <ligand>
        <name>Cu(2+)</name>
        <dbReference type="ChEBI" id="CHEBI:29036"/>
        <label>A</label>
    </ligand>
</feature>
<feature type="binding site" evidence="19">
    <location>
        <position position="333"/>
    </location>
    <ligand>
        <name>Cu(2+)</name>
        <dbReference type="ChEBI" id="CHEBI:29036"/>
        <label>A</label>
    </ligand>
</feature>
<feature type="binding site" evidence="12 22">
    <location>
        <position position="412"/>
    </location>
    <ligand>
        <name>Cu(2+)</name>
        <dbReference type="ChEBI" id="CHEBI:29036"/>
        <label>B</label>
    </ligand>
</feature>
<feature type="binding site" evidence="19">
    <location>
        <position position="414"/>
    </location>
    <ligand>
        <name>Cu(2+)</name>
        <dbReference type="ChEBI" id="CHEBI:29036"/>
        <label>B</label>
    </ligand>
</feature>
<feature type="binding site" evidence="12 22">
    <location>
        <position position="487"/>
    </location>
    <ligand>
        <name>Cu(2+)</name>
        <dbReference type="ChEBI" id="CHEBI:29036"/>
        <label>B</label>
    </ligand>
</feature>
<feature type="site" description="Cleavage" evidence="1">
    <location>
        <begin position="39"/>
        <end position="40"/>
    </location>
</feature>
<feature type="glycosylation site" description="N-linked (GlcNAc...) asparagine" evidence="12 22">
    <location>
        <position position="64"/>
    </location>
</feature>
<feature type="glycosylation site" description="N-linked (GlcNAc...) (complex) asparagine" evidence="9 10 12 22">
    <location>
        <position position="184"/>
    </location>
</feature>
<feature type="glycosylation site" description="N-linked (GlcNAc...) asparagine" evidence="12 22">
    <location>
        <position position="344"/>
    </location>
</feature>
<feature type="glycosylation site" description="N-linked (GlcNAc...) asparagine" evidence="12 22">
    <location>
        <position position="566"/>
    </location>
</feature>
<feature type="disulfide bond" evidence="12 22">
    <location>
        <begin position="154"/>
        <end position="596"/>
    </location>
</feature>
<feature type="disulfide bond" evidence="12 22">
    <location>
        <begin position="232"/>
        <end position="283"/>
    </location>
</feature>
<feature type="disulfide bond" evidence="12 22">
    <location>
        <begin position="269"/>
        <end position="295"/>
    </location>
</feature>
<feature type="disulfide bond" evidence="12 22">
    <location>
        <begin position="390"/>
        <end position="503"/>
    </location>
</feature>
<feature type="disulfide bond" evidence="12 22">
    <location>
        <begin position="394"/>
        <end position="565"/>
    </location>
</feature>
<feature type="disulfide bond" evidence="12 22">
    <location>
        <begin position="466"/>
        <end position="488"/>
    </location>
</feature>
<feature type="disulfide bond" description="Interchain (with C-530)" evidence="12 22">
    <location>
        <position position="528"/>
    </location>
</feature>
<feature type="disulfide bond" description="Interchain (with C-528)" evidence="12 22">
    <location>
        <position position="530"/>
    </location>
</feature>
<feature type="sequence variant" id="VAR_048838" description="In dbSNP:rs5318.">
    <original>G</original>
    <variation>S</variation>
    <location>
        <position position="12"/>
    </location>
</feature>
<feature type="sequence variant" id="VAR_022758" description="In ORTHYP1; dbSNP:rs267606760." evidence="8">
    <original>V</original>
    <variation>M</variation>
    <location>
        <position position="101"/>
    </location>
</feature>
<feature type="sequence variant" id="VAR_022759" description="In ORTHYP1; dbSNP:rs77576840." evidence="8">
    <original>D</original>
    <variation>E</variation>
    <location>
        <position position="114"/>
    </location>
</feature>
<feature type="sequence variant" id="VAR_014706" description="In dbSNP:rs5319.">
    <original>E</original>
    <variation>Q</variation>
    <location>
        <position position="181"/>
    </location>
</feature>
<feature type="sequence variant" id="VAR_013947" description="In dbSNP:rs5320." evidence="6 13">
    <original>A</original>
    <variation>T</variation>
    <location>
        <position position="211"/>
    </location>
</feature>
<feature type="sequence variant" id="VAR_014707" description="In dbSNP:rs5321.">
    <original>K</original>
    <variation>N</variation>
    <location>
        <position position="239"/>
    </location>
</feature>
<feature type="sequence variant" id="VAR_014708" description="In dbSNP:rs5323.">
    <original>E</original>
    <variation>Q</variation>
    <location>
        <position position="250"/>
    </location>
</feature>
<feature type="sequence variant" id="VAR_014709" description="In dbSNP:rs5324.">
    <original>D</original>
    <variation>N</variation>
    <location>
        <position position="290"/>
    </location>
</feature>
<feature type="sequence variant" id="VAR_014710" description="In dbSNP:rs5325.">
    <original>L</original>
    <variation>P</variation>
    <location>
        <position position="317"/>
    </location>
</feature>
<feature type="sequence variant" id="VAR_002196" description="In allele DBH-B; dbSNP:rs4531." evidence="5 6 7">
    <original>A</original>
    <variation>S</variation>
    <location>
        <position position="318"/>
    </location>
</feature>
<feature type="sequence variant" id="VAR_022760" description="In ORTHYP1; dbSNP:rs267606761." evidence="8">
    <original>D</original>
    <variation>N</variation>
    <location>
        <position position="345"/>
    </location>
</feature>
<feature type="sequence variant" id="VAR_013948" description="In dbSNP:rs6271." evidence="5 13">
    <original>R</original>
    <variation>C</variation>
    <location>
        <position position="549"/>
    </location>
</feature>
<feature type="sequence conflict" description="In Ref. 2; CAA68285 and 4; CAA31631/CAA31632." evidence="18" ref="2 4">
    <original>S</original>
    <variation>T</variation>
    <location>
        <position position="505"/>
    </location>
</feature>
<feature type="strand" evidence="23">
    <location>
        <begin position="48"/>
        <end position="52"/>
    </location>
</feature>
<feature type="strand" evidence="23">
    <location>
        <begin position="58"/>
        <end position="66"/>
    </location>
</feature>
<feature type="turn" evidence="23">
    <location>
        <begin position="67"/>
        <end position="70"/>
    </location>
</feature>
<feature type="strand" evidence="23">
    <location>
        <begin position="71"/>
        <end position="80"/>
    </location>
</feature>
<feature type="strand" evidence="23">
    <location>
        <begin position="83"/>
        <end position="93"/>
    </location>
</feature>
<feature type="strand" evidence="23">
    <location>
        <begin position="98"/>
        <end position="104"/>
    </location>
</feature>
<feature type="strand" evidence="23">
    <location>
        <begin position="111"/>
        <end position="117"/>
    </location>
</feature>
<feature type="strand" evidence="23">
    <location>
        <begin position="123"/>
        <end position="125"/>
    </location>
</feature>
<feature type="strand" evidence="23">
    <location>
        <begin position="130"/>
        <end position="138"/>
    </location>
</feature>
<feature type="strand" evidence="23">
    <location>
        <begin position="143"/>
        <end position="151"/>
    </location>
</feature>
<feature type="strand" evidence="23">
    <location>
        <begin position="166"/>
        <end position="173"/>
    </location>
</feature>
<feature type="strand" evidence="23">
    <location>
        <begin position="191"/>
        <end position="195"/>
    </location>
</feature>
<feature type="strand" evidence="23">
    <location>
        <begin position="212"/>
        <end position="217"/>
    </location>
</feature>
<feature type="strand" evidence="23">
    <location>
        <begin position="220"/>
        <end position="222"/>
    </location>
</feature>
<feature type="strand" evidence="23">
    <location>
        <begin position="225"/>
        <end position="236"/>
    </location>
</feature>
<feature type="strand" evidence="23">
    <location>
        <begin position="244"/>
        <end position="252"/>
    </location>
</feature>
<feature type="turn" evidence="23">
    <location>
        <begin position="255"/>
        <end position="260"/>
    </location>
</feature>
<feature type="strand" evidence="23">
    <location>
        <begin position="261"/>
        <end position="268"/>
    </location>
</feature>
<feature type="strand" evidence="23">
    <location>
        <begin position="279"/>
        <end position="284"/>
    </location>
</feature>
<feature type="strand" evidence="23">
    <location>
        <begin position="286"/>
        <end position="288"/>
    </location>
</feature>
<feature type="strand" evidence="23">
    <location>
        <begin position="290"/>
        <end position="294"/>
    </location>
</feature>
<feature type="strand" evidence="23">
    <location>
        <begin position="297"/>
        <end position="303"/>
    </location>
</feature>
<feature type="strand" evidence="23">
    <location>
        <begin position="313"/>
        <end position="319"/>
    </location>
</feature>
<feature type="strand" evidence="23">
    <location>
        <begin position="327"/>
        <end position="335"/>
    </location>
</feature>
<feature type="strand" evidence="23">
    <location>
        <begin position="348"/>
        <end position="356"/>
    </location>
</feature>
<feature type="strand" evidence="23">
    <location>
        <begin position="359"/>
        <end position="361"/>
    </location>
</feature>
<feature type="strand" evidence="23">
    <location>
        <begin position="363"/>
        <end position="369"/>
    </location>
</feature>
<feature type="strand" evidence="23">
    <location>
        <begin position="375"/>
        <end position="377"/>
    </location>
</feature>
<feature type="strand" evidence="23">
    <location>
        <begin position="382"/>
        <end position="390"/>
    </location>
</feature>
<feature type="helix" evidence="23">
    <location>
        <begin position="392"/>
        <end position="398"/>
    </location>
</feature>
<feature type="strand" evidence="23">
    <location>
        <begin position="404"/>
        <end position="412"/>
    </location>
</feature>
<feature type="strand" evidence="23">
    <location>
        <begin position="417"/>
        <end position="426"/>
    </location>
</feature>
<feature type="strand" evidence="23">
    <location>
        <begin position="429"/>
        <end position="439"/>
    </location>
</feature>
<feature type="strand" evidence="23">
    <location>
        <begin position="448"/>
        <end position="456"/>
    </location>
</feature>
<feature type="strand" evidence="23">
    <location>
        <begin position="461"/>
        <end position="468"/>
    </location>
</feature>
<feature type="strand" evidence="23">
    <location>
        <begin position="477"/>
        <end position="482"/>
    </location>
</feature>
<feature type="strand" evidence="23">
    <location>
        <begin position="489"/>
        <end position="496"/>
    </location>
</feature>
<feature type="strand" evidence="23">
    <location>
        <begin position="499"/>
        <end position="507"/>
    </location>
</feature>
<feature type="helix" evidence="23">
    <location>
        <begin position="509"/>
        <end position="522"/>
    </location>
</feature>
<feature type="helix" evidence="23">
    <location>
        <begin position="535"/>
        <end position="539"/>
    </location>
</feature>
<feature type="helix" evidence="23">
    <location>
        <begin position="546"/>
        <end position="558"/>
    </location>
</feature>
<feature type="strand" evidence="23">
    <location>
        <begin position="561"/>
        <end position="567"/>
    </location>
</feature>
<comment type="function">
    <text evidence="11 13 14 15">Catalyzes the hydroxylation of dopamine to noradrenaline (also known as norepinephrine), and is thus vital for regulation of these neurotransmitters.</text>
</comment>
<comment type="catalytic activity">
    <reaction evidence="13 14 15">
        <text>dopamine + 2 L-ascorbate + O2 = (R)-noradrenaline + 2 monodehydro-L-ascorbate radical + H2O</text>
        <dbReference type="Rhea" id="RHEA:19117"/>
        <dbReference type="ChEBI" id="CHEBI:15377"/>
        <dbReference type="ChEBI" id="CHEBI:15379"/>
        <dbReference type="ChEBI" id="CHEBI:38290"/>
        <dbReference type="ChEBI" id="CHEBI:59513"/>
        <dbReference type="ChEBI" id="CHEBI:59905"/>
        <dbReference type="ChEBI" id="CHEBI:72587"/>
        <dbReference type="EC" id="1.14.17.1"/>
    </reaction>
    <physiologicalReaction direction="left-to-right" evidence="20 21">
        <dbReference type="Rhea" id="RHEA:19118"/>
    </physiologicalReaction>
</comment>
<comment type="cofactor">
    <cofactor evidence="15 19">
        <name>Cu(2+)</name>
        <dbReference type="ChEBI" id="CHEBI:29036"/>
    </cofactor>
    <text evidence="19">Binds 2 copper ions per subunit.</text>
</comment>
<comment type="biophysicochemical properties">
    <kinetics>
        <KM evidence="15">1.8 mM for tyramine</KM>
    </kinetics>
    <phDependence>
        <text evidence="15">Optimum pH is 5.2.</text>
    </phDependence>
</comment>
<comment type="pathway">
    <text evidence="11 13 15">Catecholamine biosynthesis; (R)-noradrenaline biosynthesis; (R)-noradrenaline from dopamine: step 1/1.</text>
</comment>
<comment type="subunit">
    <text evidence="12">Homotetramer; composed of two disulfide-linked dimers.</text>
</comment>
<comment type="interaction">
    <interactant intactId="EBI-8589586">
        <id>P09172</id>
    </interactant>
    <interactant intactId="EBI-752170">
        <id>P00352</id>
        <label>ALDH1A1</label>
    </interactant>
    <organismsDiffer>false</organismsDiffer>
    <experiments>3</experiments>
</comment>
<comment type="interaction">
    <interactant intactId="EBI-8589586">
        <id>P09172</id>
    </interactant>
    <interactant intactId="EBI-11529439">
        <id>P63010-2</id>
        <label>AP2B1</label>
    </interactant>
    <organismsDiffer>false</organismsDiffer>
    <experiments>3</experiments>
</comment>
<comment type="interaction">
    <interactant intactId="EBI-8589586">
        <id>P09172</id>
    </interactant>
    <interactant intactId="EBI-7706409">
        <id>Q04656</id>
        <label>ATP7A</label>
    </interactant>
    <organismsDiffer>false</organismsDiffer>
    <experiments>2</experiments>
</comment>
<comment type="interaction">
    <interactant intactId="EBI-8589586">
        <id>P09172</id>
    </interactant>
    <interactant intactId="EBI-2837444">
        <id>Q8WUW1</id>
        <label>BRK1</label>
    </interactant>
    <organismsDiffer>false</organismsDiffer>
    <experiments>3</experiments>
</comment>
<comment type="interaction">
    <interactant intactId="EBI-8589586">
        <id>P09172</id>
    </interactant>
    <interactant intactId="EBI-350590">
        <id>Q9UNS2</id>
        <label>COPS3</label>
    </interactant>
    <organismsDiffer>false</organismsDiffer>
    <experiments>3</experiments>
</comment>
<comment type="interaction">
    <interactant intactId="EBI-8589586">
        <id>P09172</id>
    </interactant>
    <interactant intactId="EBI-750650">
        <id>Q71DI3</id>
        <label>H3C15</label>
    </interactant>
    <organismsDiffer>false</organismsDiffer>
    <experiments>3</experiments>
</comment>
<comment type="interaction">
    <interactant intactId="EBI-8589586">
        <id>P09172</id>
    </interactant>
    <interactant intactId="EBI-304185">
        <id>P61978</id>
        <label>HNRNPK</label>
    </interactant>
    <organismsDiffer>false</organismsDiffer>
    <experiments>3</experiments>
</comment>
<comment type="interaction">
    <interactant intactId="EBI-8589586">
        <id>P09172</id>
    </interactant>
    <interactant intactId="EBI-714379">
        <id>Q9Y2M5</id>
        <label>KLHL20</label>
    </interactant>
    <organismsDiffer>false</organismsDiffer>
    <experiments>3</experiments>
</comment>
<comment type="interaction">
    <interactant intactId="EBI-8589586">
        <id>P09172</id>
    </interactant>
    <interactant intactId="EBI-2432309">
        <id>Q92876</id>
        <label>KLK6</label>
    </interactant>
    <organismsDiffer>false</organismsDiffer>
    <experiments>3</experiments>
</comment>
<comment type="interaction">
    <interactant intactId="EBI-8589586">
        <id>P09172</id>
    </interactant>
    <interactant intactId="EBI-742756">
        <id>P08727</id>
        <label>KRT19</label>
    </interactant>
    <organismsDiffer>false</organismsDiffer>
    <experiments>3</experiments>
</comment>
<comment type="interaction">
    <interactant intactId="EBI-8589586">
        <id>P09172</id>
    </interactant>
    <interactant intactId="EBI-5278370">
        <id>Q14693</id>
        <label>LPIN1</label>
    </interactant>
    <organismsDiffer>false</organismsDiffer>
    <experiments>3</experiments>
</comment>
<comment type="interaction">
    <interactant intactId="EBI-8589586">
        <id>P09172</id>
    </interactant>
    <interactant intactId="EBI-22310682">
        <id>P0DPK4</id>
        <label>NOTCH2NLC</label>
    </interactant>
    <organismsDiffer>false</organismsDiffer>
    <experiments>3</experiments>
</comment>
<comment type="interaction">
    <interactant intactId="EBI-8589586">
        <id>P09172</id>
    </interactant>
    <interactant intactId="EBI-25830200">
        <id>Q6GQQ9-2</id>
        <label>OTUD7B</label>
    </interactant>
    <organismsDiffer>false</organismsDiffer>
    <experiments>3</experiments>
</comment>
<comment type="interaction">
    <interactant intactId="EBI-8589586">
        <id>P09172</id>
    </interactant>
    <interactant intactId="EBI-9090282">
        <id>P27986-2</id>
        <label>PIK3R1</label>
    </interactant>
    <organismsDiffer>false</organismsDiffer>
    <experiments>3</experiments>
</comment>
<comment type="interaction">
    <interactant intactId="EBI-8589586">
        <id>P09172</id>
    </interactant>
    <interactant intactId="EBI-25829984">
        <id>Q9ULX5</id>
        <label>RNF112</label>
    </interactant>
    <organismsDiffer>false</organismsDiffer>
    <experiments>3</experiments>
</comment>
<comment type="interaction">
    <interactant intactId="EBI-8589586">
        <id>P09172</id>
    </interactant>
    <interactant intactId="EBI-743938">
        <id>Q96D59</id>
        <label>RNF183</label>
    </interactant>
    <organismsDiffer>false</organismsDiffer>
    <experiments>3</experiments>
</comment>
<comment type="interaction">
    <interactant intactId="EBI-8589586">
        <id>P09172</id>
    </interactant>
    <interactant intactId="EBI-11528848">
        <id>Q8N6K7-2</id>
        <label>SAMD3</label>
    </interactant>
    <organismsDiffer>false</organismsDiffer>
    <experiments>3</experiments>
</comment>
<comment type="interaction">
    <interactant intactId="EBI-8589586">
        <id>P09172</id>
    </interactant>
    <interactant intactId="EBI-358545">
        <id>Q9GZS3</id>
        <label>SKIC8</label>
    </interactant>
    <organismsDiffer>false</organismsDiffer>
    <experiments>3</experiments>
</comment>
<comment type="interaction">
    <interactant intactId="EBI-8589586">
        <id>P09172</id>
    </interactant>
    <interactant intactId="EBI-2510414">
        <id>Q8IUW3</id>
        <label>SPATA2L</label>
    </interactant>
    <organismsDiffer>false</organismsDiffer>
    <experiments>3</experiments>
</comment>
<comment type="interaction">
    <interactant intactId="EBI-8589586">
        <id>P09172</id>
    </interactant>
    <interactant intactId="EBI-11525489">
        <id>Q86WT6-2</id>
        <label>TRIM69</label>
    </interactant>
    <organismsDiffer>false</organismsDiffer>
    <experiments>3</experiments>
</comment>
<comment type="subcellular location">
    <molecule>Soluble dopamine beta-hydroxylase</molecule>
    <subcellularLocation>
        <location evidence="14">Cytoplasmic vesicle</location>
        <location evidence="14">Secretory vesicle lumen</location>
    </subcellularLocation>
    <subcellularLocation>
        <location evidence="14">Cytoplasmic vesicle</location>
        <location evidence="14">Secretory vesicle</location>
        <location evidence="14">Chromaffin granule lumen</location>
    </subcellularLocation>
    <subcellularLocation>
        <location evidence="14 15">Secreted</location>
    </subcellularLocation>
</comment>
<comment type="subcellular location">
    <subcellularLocation>
        <location evidence="14">Cytoplasmic vesicle</location>
        <location evidence="14">Secretory vesicle membrane</location>
        <topology evidence="18">Single-pass type II membrane protein</topology>
    </subcellularLocation>
    <subcellularLocation>
        <location evidence="14">Cytoplasmic vesicle</location>
        <location evidence="14">Secretory vesicle</location>
        <location evidence="14">Chromaffin granule membrane</location>
        <topology evidence="18">Single-pass type II membrane protein</topology>
    </subcellularLocation>
</comment>
<comment type="induction">
    <text>Activity is enhanced by nerve growth factor (in superior cervical ganglia and adrenal medulla). Trans-synaptic stimulation with reserpine, acetylcholine and glucocorticoids.</text>
</comment>
<comment type="PTM">
    <text evidence="12 15">N-glycosylated.</text>
</comment>
<comment type="PTM">
    <text evidence="1">Proteolytic cleavage after the membrane-anchor leads to the release of the soluble form.</text>
</comment>
<comment type="polymorphism">
    <text evidence="5 6 7">There are two main alleles of DBH: DBH-A with Ala-318 and DBH-B with Ser-318 (PubMed:10391209, PubMed:10391210, PubMed:10490716).</text>
</comment>
<comment type="disease" evidence="8">
    <disease id="DI-01502">
        <name>Orthostatic hypotension 1</name>
        <acronym>ORTHYP1</acronym>
        <description>A form of orthostatic hypotension due to congenital dopamine beta-hydroxylase deficiency. Orthostatic hypotension, also known as postural hypotension, is a finding defined as a 20-mm Hg decrease in systolic pressure or a 10-mm Hg decrease in diastolic pressure occurring 3 minutes after a person has risen from supine to standing. Symptoms include dizziness, blurred vision, and sometimes syncope. ORTHYP1 is an autosomal recessive condition apparent from infancy or early childhood and characterized by low plasma and urinary levels of norepinephrine and epinephrine, and episodic hypoglycemia.</description>
        <dbReference type="MIM" id="223360"/>
    </disease>
    <text>The disease is caused by variants affecting the gene represented in this entry.</text>
</comment>
<comment type="similarity">
    <text evidence="18">Belongs to the copper type II ascorbate-dependent monooxygenase family.</text>
</comment>
<comment type="sequence caution" evidence="18">
    <conflict type="erroneous initiation">
        <sequence resource="EMBL-CDS" id="AAH17174"/>
    </conflict>
    <text>Truncated N-terminus.</text>
</comment>
<comment type="sequence caution" evidence="18">
    <conflict type="erroneous initiation">
        <sequence resource="EMBL-CDS" id="CAA31631"/>
    </conflict>
    <text>Truncated N-terminus.</text>
</comment>
<comment type="sequence caution" evidence="18">
    <conflict type="erroneous initiation">
        <sequence resource="EMBL-CDS" id="CAA31632"/>
    </conflict>
    <text>Truncated N-terminus.</text>
</comment>
<comment type="sequence caution" evidence="18">
    <conflict type="erroneous initiation">
        <sequence resource="EMBL-CDS" id="CAA68285"/>
    </conflict>
    <text>Truncated N-terminus.</text>
</comment>
<comment type="online information" name="Wikipedia">
    <link uri="https://en.wikipedia.org/wiki/Dopamine_beta_hydroxylase"/>
    <text>Dopamine beta hydroxylase entry</text>
</comment>
<sequence>MPALSRWASLPGPSMREAAFMYSTAVAIFLVILVAALQGSAPRESPLPYHIPLDPEGSLELSWNVSYTQEAIHFQLLVRRLKAGVLFGMSDRGELENADLVVLWTDGDTAYFADAWSDQKGQIHLDPQQDYQLLQVQRTPEGLTLLFKRPFGTCDPKDYLIEDGTVHLVYGILEEPFRSLEAINGSGLQMGLQRVQLLKPNIPEPELPSDACTMEVQAPNIQIPSQETTYWCYIKELPKGFSRHHIIKYEPIVTKGNEALVHHMEVFQCAPEMDSVPHFSGPCDSKMKPDRLNYCRHVLAAWALGAKAFYYPEEAGLAFGGPGSSRYLRLEVHYHNPLVIEGRNDSSGIRLYYTAKLRRFNAGIMELGLVYTPVMAIPPRETAFILTGYCTDKCTQLALPPSGIHIFASQLHTHLTGRKVVTVLVRDGREWEIVNQDNHYSPHFQEIRMLKKVVSVHPGDVLITSCTYNTEDRELATVGGFGILEEMCVNYVHYYPQTQLELCKSAVDAGFLQKYFHLINRFNNEDVCTCPQASVSQQFTSVPWNSFNRDVLKALYSFAPISMHCNKSSAVRFQGEWNLQPLPKVISTLEEPTPQCPTSQGRSPAGPTVVSIGGGKG</sequence>
<evidence type="ECO:0000250" key="1">
    <source>
        <dbReference type="UniProtKB" id="P15101"/>
    </source>
</evidence>
<evidence type="ECO:0000255" key="2"/>
<evidence type="ECO:0000255" key="3">
    <source>
        <dbReference type="PROSITE-ProRule" id="PRU00246"/>
    </source>
</evidence>
<evidence type="ECO:0000256" key="4">
    <source>
        <dbReference type="SAM" id="MobiDB-lite"/>
    </source>
</evidence>
<evidence type="ECO:0000269" key="5">
    <source>
    </source>
</evidence>
<evidence type="ECO:0000269" key="6">
    <source>
    </source>
</evidence>
<evidence type="ECO:0000269" key="7">
    <source>
    </source>
</evidence>
<evidence type="ECO:0000269" key="8">
    <source>
    </source>
</evidence>
<evidence type="ECO:0000269" key="9">
    <source>
    </source>
</evidence>
<evidence type="ECO:0000269" key="10">
    <source>
    </source>
</evidence>
<evidence type="ECO:0000269" key="11">
    <source>
    </source>
</evidence>
<evidence type="ECO:0000269" key="12">
    <source>
    </source>
</evidence>
<evidence type="ECO:0000269" key="13">
    <source>
    </source>
</evidence>
<evidence type="ECO:0000269" key="14">
    <source>
    </source>
</evidence>
<evidence type="ECO:0000269" key="15">
    <source>
    </source>
</evidence>
<evidence type="ECO:0000303" key="16">
    <source>
    </source>
</evidence>
<evidence type="ECO:0000303" key="17">
    <source>
    </source>
</evidence>
<evidence type="ECO:0000305" key="18"/>
<evidence type="ECO:0000305" key="19">
    <source>
    </source>
</evidence>
<evidence type="ECO:0000305" key="20">
    <source>
    </source>
</evidence>
<evidence type="ECO:0000305" key="21">
    <source>
    </source>
</evidence>
<evidence type="ECO:0007744" key="22">
    <source>
        <dbReference type="PDB" id="4ZEL"/>
    </source>
</evidence>
<evidence type="ECO:0007829" key="23">
    <source>
        <dbReference type="PDB" id="4ZEL"/>
    </source>
</evidence>
<name>DOPO_HUMAN</name>
<proteinExistence type="evidence at protein level"/>
<dbReference type="EC" id="1.14.17.1" evidence="13 14 15"/>
<dbReference type="EMBL" id="AL365494">
    <property type="status" value="NOT_ANNOTATED_CDS"/>
    <property type="molecule type" value="Genomic_DNA"/>
</dbReference>
<dbReference type="EMBL" id="Y00096">
    <property type="protein sequence ID" value="CAA68285.1"/>
    <property type="status" value="ALT_INIT"/>
    <property type="molecule type" value="mRNA"/>
</dbReference>
<dbReference type="EMBL" id="BC017174">
    <property type="protein sequence ID" value="AAH17174.1"/>
    <property type="status" value="ALT_INIT"/>
    <property type="molecule type" value="mRNA"/>
</dbReference>
<dbReference type="EMBL" id="X13255">
    <property type="protein sequence ID" value="CAA31631.1"/>
    <property type="status" value="ALT_INIT"/>
    <property type="molecule type" value="mRNA"/>
</dbReference>
<dbReference type="EMBL" id="X13256">
    <property type="protein sequence ID" value="CAA31632.1"/>
    <property type="status" value="ALT_INIT"/>
    <property type="molecule type" value="mRNA"/>
</dbReference>
<dbReference type="CCDS" id="CCDS6977.2"/>
<dbReference type="PIR" id="S03020">
    <property type="entry name" value="S03020"/>
</dbReference>
<dbReference type="RefSeq" id="NP_000778.3">
    <property type="nucleotide sequence ID" value="NM_000787.3"/>
</dbReference>
<dbReference type="PDB" id="4ZEL">
    <property type="method" value="X-ray"/>
    <property type="resolution" value="2.90 A"/>
    <property type="chains" value="A/B=40-617"/>
</dbReference>
<dbReference type="PDBsum" id="4ZEL"/>
<dbReference type="SMR" id="P09172"/>
<dbReference type="BioGRID" id="107989">
    <property type="interactions" value="20"/>
</dbReference>
<dbReference type="FunCoup" id="P09172">
    <property type="interactions" value="147"/>
</dbReference>
<dbReference type="IntAct" id="P09172">
    <property type="interactions" value="25"/>
</dbReference>
<dbReference type="MINT" id="P09172"/>
<dbReference type="STRING" id="9606.ENSP00000376776"/>
<dbReference type="BindingDB" id="P09172"/>
<dbReference type="ChEMBL" id="CHEMBL3102"/>
<dbReference type="DrugBank" id="DB00126">
    <property type="generic name" value="Ascorbic acid"/>
</dbReference>
<dbReference type="DrugBank" id="DB06774">
    <property type="generic name" value="Capsaicin"/>
</dbReference>
<dbReference type="DrugBank" id="DB09130">
    <property type="generic name" value="Copper"/>
</dbReference>
<dbReference type="DrugBank" id="DB05394">
    <property type="generic name" value="Corticorelin"/>
</dbReference>
<dbReference type="DrugBank" id="DB00822">
    <property type="generic name" value="Disulfiram"/>
</dbReference>
<dbReference type="DrugBank" id="DB00988">
    <property type="generic name" value="Dopamine"/>
</dbReference>
<dbReference type="DrugBank" id="DB15288">
    <property type="generic name" value="Etamicastat"/>
</dbReference>
<dbReference type="DrugBank" id="DB00968">
    <property type="generic name" value="Methyldopa"/>
</dbReference>
<dbReference type="DrugBank" id="DB00550">
    <property type="generic name" value="Propylthiouracil"/>
</dbReference>
<dbReference type="DrugCentral" id="P09172"/>
<dbReference type="GuidetoPHARMACOLOGY" id="2486"/>
<dbReference type="GlyConnect" id="1933">
    <property type="glycosylation" value="9 N-Linked glycans (1 site)"/>
</dbReference>
<dbReference type="GlyCosmos" id="P09172">
    <property type="glycosylation" value="3 sites, 9 glycans"/>
</dbReference>
<dbReference type="GlyGen" id="P09172">
    <property type="glycosylation" value="5 sites, 12 N-linked glycans (2 sites)"/>
</dbReference>
<dbReference type="iPTMnet" id="P09172"/>
<dbReference type="PhosphoSitePlus" id="P09172"/>
<dbReference type="SwissPalm" id="P09172"/>
<dbReference type="BioMuta" id="DBH"/>
<dbReference type="DMDM" id="158517849"/>
<dbReference type="MassIVE" id="P09172"/>
<dbReference type="PaxDb" id="9606-ENSP00000376776"/>
<dbReference type="PeptideAtlas" id="P09172"/>
<dbReference type="ProteomicsDB" id="52205"/>
<dbReference type="Antibodypedia" id="881">
    <property type="antibodies" value="547 antibodies from 46 providers"/>
</dbReference>
<dbReference type="DNASU" id="1621"/>
<dbReference type="Ensembl" id="ENST00000393056.8">
    <property type="protein sequence ID" value="ENSP00000376776.2"/>
    <property type="gene ID" value="ENSG00000123454.12"/>
</dbReference>
<dbReference type="GeneID" id="1621"/>
<dbReference type="KEGG" id="hsa:1621"/>
<dbReference type="MANE-Select" id="ENST00000393056.8">
    <property type="protein sequence ID" value="ENSP00000376776.2"/>
    <property type="RefSeq nucleotide sequence ID" value="NM_000787.4"/>
    <property type="RefSeq protein sequence ID" value="NP_000778.3"/>
</dbReference>
<dbReference type="UCSC" id="uc004cel.4">
    <property type="organism name" value="human"/>
</dbReference>
<dbReference type="AGR" id="HGNC:2689"/>
<dbReference type="CTD" id="1621"/>
<dbReference type="DisGeNET" id="1621"/>
<dbReference type="GeneCards" id="DBH"/>
<dbReference type="GeneReviews" id="DBH"/>
<dbReference type="HGNC" id="HGNC:2689">
    <property type="gene designation" value="DBH"/>
</dbReference>
<dbReference type="HPA" id="ENSG00000123454">
    <property type="expression patterns" value="Tissue enriched (adrenal)"/>
</dbReference>
<dbReference type="MalaCards" id="DBH"/>
<dbReference type="MIM" id="223360">
    <property type="type" value="phenotype"/>
</dbReference>
<dbReference type="MIM" id="609312">
    <property type="type" value="gene"/>
</dbReference>
<dbReference type="neXtProt" id="NX_P09172"/>
<dbReference type="OpenTargets" id="ENSG00000123454"/>
<dbReference type="Orphanet" id="230">
    <property type="disease" value="Dopamine beta-hydroxylase deficiency"/>
</dbReference>
<dbReference type="PharmGKB" id="PA136"/>
<dbReference type="VEuPathDB" id="HostDB:ENSG00000123454"/>
<dbReference type="eggNOG" id="KOG3568">
    <property type="taxonomic scope" value="Eukaryota"/>
</dbReference>
<dbReference type="GeneTree" id="ENSGT00530000063085"/>
<dbReference type="HOGENOM" id="CLU_017939_3_0_1"/>
<dbReference type="InParanoid" id="P09172"/>
<dbReference type="OMA" id="FPHFSGP"/>
<dbReference type="OrthoDB" id="129121at2759"/>
<dbReference type="PAN-GO" id="P09172">
    <property type="GO annotations" value="7 GO annotations based on evolutionary models"/>
</dbReference>
<dbReference type="PhylomeDB" id="P09172"/>
<dbReference type="TreeFam" id="TF320698"/>
<dbReference type="BioCyc" id="MetaCyc:MONOMER66-381"/>
<dbReference type="BRENDA" id="1.14.17.1">
    <property type="organism ID" value="2681"/>
</dbReference>
<dbReference type="PathwayCommons" id="P09172"/>
<dbReference type="Reactome" id="R-HSA-209905">
    <property type="pathway name" value="Catecholamine biosynthesis"/>
</dbReference>
<dbReference type="SignaLink" id="P09172"/>
<dbReference type="SIGNOR" id="P09172"/>
<dbReference type="UniPathway" id="UPA00748">
    <property type="reaction ID" value="UER00735"/>
</dbReference>
<dbReference type="BioGRID-ORCS" id="1621">
    <property type="hits" value="14 hits in 1158 CRISPR screens"/>
</dbReference>
<dbReference type="ChiTaRS" id="DBH">
    <property type="organism name" value="human"/>
</dbReference>
<dbReference type="GeneWiki" id="Dopamine_beta_hydroxylase"/>
<dbReference type="GenomeRNAi" id="1621"/>
<dbReference type="Pharos" id="P09172">
    <property type="development level" value="Tchem"/>
</dbReference>
<dbReference type="PRO" id="PR:P09172"/>
<dbReference type="Proteomes" id="UP000005640">
    <property type="component" value="Chromosome 9"/>
</dbReference>
<dbReference type="RNAct" id="P09172">
    <property type="molecule type" value="protein"/>
</dbReference>
<dbReference type="Bgee" id="ENSG00000123454">
    <property type="expression patterns" value="Expressed in right lobe of liver and 103 other cell types or tissues"/>
</dbReference>
<dbReference type="ExpressionAtlas" id="P09172">
    <property type="expression patterns" value="baseline and differential"/>
</dbReference>
<dbReference type="GO" id="GO:0034451">
    <property type="term" value="C:centriolar satellite"/>
    <property type="evidence" value="ECO:0000314"/>
    <property type="project" value="HPA"/>
</dbReference>
<dbReference type="GO" id="GO:0034466">
    <property type="term" value="C:chromaffin granule lumen"/>
    <property type="evidence" value="ECO:0007669"/>
    <property type="project" value="UniProtKB-SubCell"/>
</dbReference>
<dbReference type="GO" id="GO:0042584">
    <property type="term" value="C:chromaffin granule membrane"/>
    <property type="evidence" value="ECO:0007669"/>
    <property type="project" value="UniProtKB-SubCell"/>
</dbReference>
<dbReference type="GO" id="GO:0005737">
    <property type="term" value="C:cytoplasm"/>
    <property type="evidence" value="ECO:0000304"/>
    <property type="project" value="ProtInc"/>
</dbReference>
<dbReference type="GO" id="GO:0005783">
    <property type="term" value="C:endoplasmic reticulum"/>
    <property type="evidence" value="ECO:0000314"/>
    <property type="project" value="HPA"/>
</dbReference>
<dbReference type="GO" id="GO:0005576">
    <property type="term" value="C:extracellular region"/>
    <property type="evidence" value="ECO:0000303"/>
    <property type="project" value="UniProtKB"/>
</dbReference>
<dbReference type="GO" id="GO:0005615">
    <property type="term" value="C:extracellular space"/>
    <property type="evidence" value="ECO:0000314"/>
    <property type="project" value="UniProtKB"/>
</dbReference>
<dbReference type="GO" id="GO:0043231">
    <property type="term" value="C:intracellular membrane-bounded organelle"/>
    <property type="evidence" value="ECO:0000314"/>
    <property type="project" value="HPA"/>
</dbReference>
<dbReference type="GO" id="GO:0016020">
    <property type="term" value="C:membrane"/>
    <property type="evidence" value="ECO:0000304"/>
    <property type="project" value="ProtInc"/>
</dbReference>
<dbReference type="GO" id="GO:0034774">
    <property type="term" value="C:secretory granule lumen"/>
    <property type="evidence" value="ECO:0000314"/>
    <property type="project" value="UniProtKB"/>
</dbReference>
<dbReference type="GO" id="GO:0030667">
    <property type="term" value="C:secretory granule membrane"/>
    <property type="evidence" value="ECO:0000314"/>
    <property type="project" value="UniProtKB"/>
</dbReference>
<dbReference type="GO" id="GO:0045202">
    <property type="term" value="C:synapse"/>
    <property type="evidence" value="ECO:0007669"/>
    <property type="project" value="GOC"/>
</dbReference>
<dbReference type="GO" id="GO:0030658">
    <property type="term" value="C:transport vesicle membrane"/>
    <property type="evidence" value="ECO:0007669"/>
    <property type="project" value="UniProtKB-SubCell"/>
</dbReference>
<dbReference type="GO" id="GO:0003824">
    <property type="term" value="F:catalytic activity"/>
    <property type="evidence" value="ECO:0000304"/>
    <property type="project" value="ProtInc"/>
</dbReference>
<dbReference type="GO" id="GO:0005507">
    <property type="term" value="F:copper ion binding"/>
    <property type="evidence" value="ECO:0000314"/>
    <property type="project" value="UniProtKB"/>
</dbReference>
<dbReference type="GO" id="GO:0004500">
    <property type="term" value="F:dopamine beta-monooxygenase activity"/>
    <property type="evidence" value="ECO:0000314"/>
    <property type="project" value="UniProtKB"/>
</dbReference>
<dbReference type="GO" id="GO:0031418">
    <property type="term" value="F:L-ascorbic acid binding"/>
    <property type="evidence" value="ECO:0007669"/>
    <property type="project" value="UniProtKB-KW"/>
</dbReference>
<dbReference type="GO" id="GO:0048149">
    <property type="term" value="P:behavioral response to ethanol"/>
    <property type="evidence" value="ECO:0007669"/>
    <property type="project" value="Ensembl"/>
</dbReference>
<dbReference type="GO" id="GO:0001974">
    <property type="term" value="P:blood vessel remodeling"/>
    <property type="evidence" value="ECO:0007669"/>
    <property type="project" value="Ensembl"/>
</dbReference>
<dbReference type="GO" id="GO:0007268">
    <property type="term" value="P:chemical synaptic transmission"/>
    <property type="evidence" value="ECO:0000304"/>
    <property type="project" value="ProtInc"/>
</dbReference>
<dbReference type="GO" id="GO:0042420">
    <property type="term" value="P:dopamine catabolic process"/>
    <property type="evidence" value="ECO:0000314"/>
    <property type="project" value="UniProtKB"/>
</dbReference>
<dbReference type="GO" id="GO:0042596">
    <property type="term" value="P:fear response"/>
    <property type="evidence" value="ECO:0007669"/>
    <property type="project" value="Ensembl"/>
</dbReference>
<dbReference type="GO" id="GO:0042593">
    <property type="term" value="P:glucose homeostasis"/>
    <property type="evidence" value="ECO:0007669"/>
    <property type="project" value="Ensembl"/>
</dbReference>
<dbReference type="GO" id="GO:0042309">
    <property type="term" value="P:homoiothermy"/>
    <property type="evidence" value="ECO:0007669"/>
    <property type="project" value="Ensembl"/>
</dbReference>
<dbReference type="GO" id="GO:0002443">
    <property type="term" value="P:leukocyte mediated immunity"/>
    <property type="evidence" value="ECO:0007669"/>
    <property type="project" value="Ensembl"/>
</dbReference>
<dbReference type="GO" id="GO:0050900">
    <property type="term" value="P:leukocyte migration"/>
    <property type="evidence" value="ECO:0007669"/>
    <property type="project" value="Ensembl"/>
</dbReference>
<dbReference type="GO" id="GO:0007626">
    <property type="term" value="P:locomotory behavior"/>
    <property type="evidence" value="ECO:0007669"/>
    <property type="project" value="Ensembl"/>
</dbReference>
<dbReference type="GO" id="GO:0042711">
    <property type="term" value="P:maternal behavior"/>
    <property type="evidence" value="ECO:0007669"/>
    <property type="project" value="Ensembl"/>
</dbReference>
<dbReference type="GO" id="GO:0007613">
    <property type="term" value="P:memory"/>
    <property type="evidence" value="ECO:0007669"/>
    <property type="project" value="Ensembl"/>
</dbReference>
<dbReference type="GO" id="GO:0042421">
    <property type="term" value="P:norepinephrine biosynthetic process"/>
    <property type="evidence" value="ECO:0000315"/>
    <property type="project" value="UniProtKB"/>
</dbReference>
<dbReference type="GO" id="GO:0006589">
    <property type="term" value="P:octopamine biosynthetic process"/>
    <property type="evidence" value="ECO:0000318"/>
    <property type="project" value="GO_Central"/>
</dbReference>
<dbReference type="GO" id="GO:0120162">
    <property type="term" value="P:positive regulation of cold-induced thermogenesis"/>
    <property type="evidence" value="ECO:0000250"/>
    <property type="project" value="YuBioLab"/>
</dbReference>
<dbReference type="GO" id="GO:0045907">
    <property type="term" value="P:positive regulation of vasoconstriction"/>
    <property type="evidence" value="ECO:0007669"/>
    <property type="project" value="Ensembl"/>
</dbReference>
<dbReference type="GO" id="GO:2001236">
    <property type="term" value="P:regulation of extrinsic apoptotic signaling pathway"/>
    <property type="evidence" value="ECO:0007669"/>
    <property type="project" value="Ensembl"/>
</dbReference>
<dbReference type="GO" id="GO:1904705">
    <property type="term" value="P:regulation of vascular associated smooth muscle cell proliferation"/>
    <property type="evidence" value="ECO:0007669"/>
    <property type="project" value="Ensembl"/>
</dbReference>
<dbReference type="GO" id="GO:1905562">
    <property type="term" value="P:regulation of vascular endothelial cell proliferation"/>
    <property type="evidence" value="ECO:0007669"/>
    <property type="project" value="Ensembl"/>
</dbReference>
<dbReference type="GO" id="GO:0001975">
    <property type="term" value="P:response to amphetamine"/>
    <property type="evidence" value="ECO:0007669"/>
    <property type="project" value="Ensembl"/>
</dbReference>
<dbReference type="GO" id="GO:0048265">
    <property type="term" value="P:response to pain"/>
    <property type="evidence" value="ECO:0007669"/>
    <property type="project" value="Ensembl"/>
</dbReference>
<dbReference type="GO" id="GO:0042310">
    <property type="term" value="P:vasoconstriction"/>
    <property type="evidence" value="ECO:0007669"/>
    <property type="project" value="Ensembl"/>
</dbReference>
<dbReference type="GO" id="GO:0008542">
    <property type="term" value="P:visual learning"/>
    <property type="evidence" value="ECO:0007669"/>
    <property type="project" value="Ensembl"/>
</dbReference>
<dbReference type="CDD" id="cd09631">
    <property type="entry name" value="DOMON_DOH"/>
    <property type="match status" value="1"/>
</dbReference>
<dbReference type="FunFam" id="2.60.120.310:FF:000003">
    <property type="entry name" value="Dopamine beta-hydroxylase"/>
    <property type="match status" value="1"/>
</dbReference>
<dbReference type="FunFam" id="2.60.120.230:FF:000001">
    <property type="entry name" value="Monooxygenase, DBH-like 1"/>
    <property type="match status" value="1"/>
</dbReference>
<dbReference type="Gene3D" id="2.60.120.230">
    <property type="match status" value="1"/>
</dbReference>
<dbReference type="Gene3D" id="2.60.120.310">
    <property type="entry name" value="Copper type II, ascorbate-dependent monooxygenase, N-terminal domain"/>
    <property type="match status" value="1"/>
</dbReference>
<dbReference type="InterPro" id="IPR014784">
    <property type="entry name" value="Cu2_ascorb_mOase-like_C"/>
</dbReference>
<dbReference type="InterPro" id="IPR020611">
    <property type="entry name" value="Cu2_ascorb_mOase_CS-1"/>
</dbReference>
<dbReference type="InterPro" id="IPR014783">
    <property type="entry name" value="Cu2_ascorb_mOase_CS-2"/>
</dbReference>
<dbReference type="InterPro" id="IPR000323">
    <property type="entry name" value="Cu2_ascorb_mOase_N"/>
</dbReference>
<dbReference type="InterPro" id="IPR036939">
    <property type="entry name" value="Cu2_ascorb_mOase_N_sf"/>
</dbReference>
<dbReference type="InterPro" id="IPR024548">
    <property type="entry name" value="Cu2_monoox_C"/>
</dbReference>
<dbReference type="InterPro" id="IPR000945">
    <property type="entry name" value="DBH-like"/>
</dbReference>
<dbReference type="InterPro" id="IPR045266">
    <property type="entry name" value="DOH_DOMON"/>
</dbReference>
<dbReference type="InterPro" id="IPR005018">
    <property type="entry name" value="DOMON_domain"/>
</dbReference>
<dbReference type="InterPro" id="IPR008977">
    <property type="entry name" value="PHM/PNGase_F_dom_sf"/>
</dbReference>
<dbReference type="InterPro" id="IPR028460">
    <property type="entry name" value="Tbh/DBH"/>
</dbReference>
<dbReference type="PANTHER" id="PTHR10157">
    <property type="entry name" value="DOPAMINE BETA HYDROXYLASE RELATED"/>
    <property type="match status" value="1"/>
</dbReference>
<dbReference type="PANTHER" id="PTHR10157:SF29">
    <property type="entry name" value="DOPAMINE BETA-HYDROXYLASE"/>
    <property type="match status" value="1"/>
</dbReference>
<dbReference type="Pfam" id="PF03712">
    <property type="entry name" value="Cu2_monoox_C"/>
    <property type="match status" value="1"/>
</dbReference>
<dbReference type="Pfam" id="PF01082">
    <property type="entry name" value="Cu2_monooxygen"/>
    <property type="match status" value="1"/>
</dbReference>
<dbReference type="Pfam" id="PF03351">
    <property type="entry name" value="DOMON"/>
    <property type="match status" value="1"/>
</dbReference>
<dbReference type="PRINTS" id="PR00767">
    <property type="entry name" value="DBMONOXGNASE"/>
</dbReference>
<dbReference type="SMART" id="SM00664">
    <property type="entry name" value="DoH"/>
    <property type="match status" value="1"/>
</dbReference>
<dbReference type="SUPFAM" id="SSF49742">
    <property type="entry name" value="PHM/PNGase F"/>
    <property type="match status" value="2"/>
</dbReference>
<dbReference type="PROSITE" id="PS00084">
    <property type="entry name" value="CU2_MONOOXYGENASE_1"/>
    <property type="match status" value="1"/>
</dbReference>
<dbReference type="PROSITE" id="PS00085">
    <property type="entry name" value="CU2_MONOOXYGENASE_2"/>
    <property type="match status" value="1"/>
</dbReference>
<dbReference type="PROSITE" id="PS50836">
    <property type="entry name" value="DOMON"/>
    <property type="match status" value="1"/>
</dbReference>
<accession>P09172</accession>
<accession>Q5T381</accession>
<accession>Q96AG2</accession>
<gene>
    <name type="primary">DBH</name>
</gene>